<organism>
    <name type="scientific">Microtus duodecimcostatus</name>
    <name type="common">Mediterranean pine vole</name>
    <dbReference type="NCBI Taxonomy" id="184257"/>
    <lineage>
        <taxon>Eukaryota</taxon>
        <taxon>Metazoa</taxon>
        <taxon>Chordata</taxon>
        <taxon>Craniata</taxon>
        <taxon>Vertebrata</taxon>
        <taxon>Euteleostomi</taxon>
        <taxon>Mammalia</taxon>
        <taxon>Eutheria</taxon>
        <taxon>Euarchontoglires</taxon>
        <taxon>Glires</taxon>
        <taxon>Rodentia</taxon>
        <taxon>Myomorpha</taxon>
        <taxon>Muroidea</taxon>
        <taxon>Cricetidae</taxon>
        <taxon>Arvicolinae</taxon>
        <taxon>Microtus</taxon>
    </lineage>
</organism>
<dbReference type="EMBL" id="AY513796">
    <property type="protein sequence ID" value="AAS82788.1"/>
    <property type="molecule type" value="Genomic_DNA"/>
</dbReference>
<dbReference type="EMBL" id="AY513797">
    <property type="protein sequence ID" value="AAS82789.1"/>
    <property type="molecule type" value="Genomic_DNA"/>
</dbReference>
<dbReference type="SMR" id="Q6JDU0"/>
<dbReference type="GO" id="GO:0005743">
    <property type="term" value="C:mitochondrial inner membrane"/>
    <property type="evidence" value="ECO:0007669"/>
    <property type="project" value="UniProtKB-SubCell"/>
</dbReference>
<dbReference type="GO" id="GO:0045275">
    <property type="term" value="C:respiratory chain complex III"/>
    <property type="evidence" value="ECO:0007669"/>
    <property type="project" value="InterPro"/>
</dbReference>
<dbReference type="GO" id="GO:0046872">
    <property type="term" value="F:metal ion binding"/>
    <property type="evidence" value="ECO:0007669"/>
    <property type="project" value="UniProtKB-KW"/>
</dbReference>
<dbReference type="GO" id="GO:0008121">
    <property type="term" value="F:ubiquinol-cytochrome-c reductase activity"/>
    <property type="evidence" value="ECO:0007669"/>
    <property type="project" value="InterPro"/>
</dbReference>
<dbReference type="GO" id="GO:0006122">
    <property type="term" value="P:mitochondrial electron transport, ubiquinol to cytochrome c"/>
    <property type="evidence" value="ECO:0007669"/>
    <property type="project" value="TreeGrafter"/>
</dbReference>
<dbReference type="CDD" id="cd00290">
    <property type="entry name" value="cytochrome_b_C"/>
    <property type="match status" value="1"/>
</dbReference>
<dbReference type="CDD" id="cd00284">
    <property type="entry name" value="Cytochrome_b_N"/>
    <property type="match status" value="1"/>
</dbReference>
<dbReference type="FunFam" id="1.20.810.10:FF:000002">
    <property type="entry name" value="Cytochrome b"/>
    <property type="match status" value="1"/>
</dbReference>
<dbReference type="Gene3D" id="1.20.810.10">
    <property type="entry name" value="Cytochrome Bc1 Complex, Chain C"/>
    <property type="match status" value="1"/>
</dbReference>
<dbReference type="InterPro" id="IPR005798">
    <property type="entry name" value="Cyt_b/b6_C"/>
</dbReference>
<dbReference type="InterPro" id="IPR036150">
    <property type="entry name" value="Cyt_b/b6_C_sf"/>
</dbReference>
<dbReference type="InterPro" id="IPR005797">
    <property type="entry name" value="Cyt_b/b6_N"/>
</dbReference>
<dbReference type="InterPro" id="IPR027387">
    <property type="entry name" value="Cytb/b6-like_sf"/>
</dbReference>
<dbReference type="InterPro" id="IPR030689">
    <property type="entry name" value="Cytochrome_b"/>
</dbReference>
<dbReference type="InterPro" id="IPR048260">
    <property type="entry name" value="Cytochrome_b_C_euk/bac"/>
</dbReference>
<dbReference type="InterPro" id="IPR048259">
    <property type="entry name" value="Cytochrome_b_N_euk/bac"/>
</dbReference>
<dbReference type="InterPro" id="IPR016174">
    <property type="entry name" value="Di-haem_cyt_TM"/>
</dbReference>
<dbReference type="PANTHER" id="PTHR19271">
    <property type="entry name" value="CYTOCHROME B"/>
    <property type="match status" value="1"/>
</dbReference>
<dbReference type="PANTHER" id="PTHR19271:SF16">
    <property type="entry name" value="CYTOCHROME B"/>
    <property type="match status" value="1"/>
</dbReference>
<dbReference type="Pfam" id="PF00032">
    <property type="entry name" value="Cytochrom_B_C"/>
    <property type="match status" value="1"/>
</dbReference>
<dbReference type="Pfam" id="PF00033">
    <property type="entry name" value="Cytochrome_B"/>
    <property type="match status" value="1"/>
</dbReference>
<dbReference type="PIRSF" id="PIRSF038885">
    <property type="entry name" value="COB"/>
    <property type="match status" value="1"/>
</dbReference>
<dbReference type="SUPFAM" id="SSF81648">
    <property type="entry name" value="a domain/subunit of cytochrome bc1 complex (Ubiquinol-cytochrome c reductase)"/>
    <property type="match status" value="1"/>
</dbReference>
<dbReference type="SUPFAM" id="SSF81342">
    <property type="entry name" value="Transmembrane di-heme cytochromes"/>
    <property type="match status" value="1"/>
</dbReference>
<dbReference type="PROSITE" id="PS51003">
    <property type="entry name" value="CYTB_CTER"/>
    <property type="match status" value="1"/>
</dbReference>
<dbReference type="PROSITE" id="PS51002">
    <property type="entry name" value="CYTB_NTER"/>
    <property type="match status" value="1"/>
</dbReference>
<geneLocation type="mitochondrion"/>
<evidence type="ECO:0000250" key="1"/>
<evidence type="ECO:0000250" key="2">
    <source>
        <dbReference type="UniProtKB" id="P00157"/>
    </source>
</evidence>
<evidence type="ECO:0000255" key="3">
    <source>
        <dbReference type="PROSITE-ProRule" id="PRU00967"/>
    </source>
</evidence>
<evidence type="ECO:0000255" key="4">
    <source>
        <dbReference type="PROSITE-ProRule" id="PRU00968"/>
    </source>
</evidence>
<sequence>MTIIRKKHPLIKIINHSFIDLPAPSNISSWWNFGSLLGLCLAIQILTGLFLAMHYTSDTATAFSSVTHICRDVNYGWLIRYMHANGASMFFICLFLHVGRGVYYGSYNMIETWNMGIILLFAVMATAFMGYVLPWGQMSFWGATVITNLLSAIPYIGTTLVEWIWGGFSVDKATLTRFFAFHFILPFIITALVLVHLLFLHETGSNNPTGLNSDADKIPFHPYYTIKDLLGVLVLLTVFMILTLFFPDILGDPDNYTPANPLTTPPHIKPEWYFLFAYAILRSIPNKLGGVLALILSILILALMPLLHTSKQRALTFRPITQTMYWILVADLLVLTWIGGQPVEYPFIIIGQTASVTYFAIIMILMPIAGMIENNILDLD</sequence>
<protein>
    <recommendedName>
        <fullName>Cytochrome b</fullName>
    </recommendedName>
    <alternativeName>
        <fullName>Complex III subunit 3</fullName>
    </alternativeName>
    <alternativeName>
        <fullName>Complex III subunit III</fullName>
    </alternativeName>
    <alternativeName>
        <fullName>Cytochrome b-c1 complex subunit 3</fullName>
    </alternativeName>
    <alternativeName>
        <fullName>Ubiquinol-cytochrome-c reductase complex cytochrome b subunit</fullName>
    </alternativeName>
</protein>
<name>CYB_MICDU</name>
<gene>
    <name type="primary">MT-CYB</name>
    <name type="synonym">COB</name>
    <name type="synonym">CYTB</name>
    <name type="synonym">MTCYB</name>
</gene>
<reference key="1">
    <citation type="journal article" date="2004" name="Mol. Phylogenet. Evol.">
        <title>Molecular phylogeny of the speciose vole genus Microtus (Arvicolinae, Rodentia) inferred from mitochondrial DNA sequences.</title>
        <authorList>
            <person name="Jaarola M."/>
            <person name="Martinkova N."/>
            <person name="Gunduz I."/>
            <person name="Brunhoff C."/>
            <person name="Zima J."/>
            <person name="Nadachowski A."/>
            <person name="Amori G."/>
            <person name="Bulatova N.S."/>
            <person name="Chondropoulos B."/>
            <person name="Fraguedakis-Tsolis S."/>
            <person name="Gonzalez-Esteban J."/>
            <person name="Lopez-Fuster M.J."/>
            <person name="Kandaurov A.S."/>
            <person name="Kefelioglu H."/>
            <person name="Mathias M.L."/>
            <person name="Villate I."/>
            <person name="Searle J.B."/>
        </authorList>
    </citation>
    <scope>NUCLEOTIDE SEQUENCE [GENOMIC DNA]</scope>
    <source>
        <strain>Isolate 1</strain>
        <strain>Isolate 2</strain>
    </source>
</reference>
<proteinExistence type="inferred from homology"/>
<feature type="chain" id="PRO_0000255076" description="Cytochrome b">
    <location>
        <begin position="1"/>
        <end position="380"/>
    </location>
</feature>
<feature type="transmembrane region" description="Helical" evidence="2">
    <location>
        <begin position="33"/>
        <end position="53"/>
    </location>
</feature>
<feature type="transmembrane region" description="Helical" evidence="2">
    <location>
        <begin position="77"/>
        <end position="98"/>
    </location>
</feature>
<feature type="transmembrane region" description="Helical" evidence="2">
    <location>
        <begin position="113"/>
        <end position="133"/>
    </location>
</feature>
<feature type="transmembrane region" description="Helical" evidence="2">
    <location>
        <begin position="178"/>
        <end position="198"/>
    </location>
</feature>
<feature type="transmembrane region" description="Helical" evidence="2">
    <location>
        <begin position="226"/>
        <end position="246"/>
    </location>
</feature>
<feature type="transmembrane region" description="Helical" evidence="2">
    <location>
        <begin position="288"/>
        <end position="308"/>
    </location>
</feature>
<feature type="transmembrane region" description="Helical" evidence="2">
    <location>
        <begin position="320"/>
        <end position="340"/>
    </location>
</feature>
<feature type="transmembrane region" description="Helical" evidence="2">
    <location>
        <begin position="347"/>
        <end position="367"/>
    </location>
</feature>
<feature type="binding site" description="axial binding residue" evidence="2">
    <location>
        <position position="83"/>
    </location>
    <ligand>
        <name>heme b</name>
        <dbReference type="ChEBI" id="CHEBI:60344"/>
        <label>b562</label>
    </ligand>
    <ligandPart>
        <name>Fe</name>
        <dbReference type="ChEBI" id="CHEBI:18248"/>
    </ligandPart>
</feature>
<feature type="binding site" description="axial binding residue" evidence="2">
    <location>
        <position position="97"/>
    </location>
    <ligand>
        <name>heme b</name>
        <dbReference type="ChEBI" id="CHEBI:60344"/>
        <label>b566</label>
    </ligand>
    <ligandPart>
        <name>Fe</name>
        <dbReference type="ChEBI" id="CHEBI:18248"/>
    </ligandPart>
</feature>
<feature type="binding site" description="axial binding residue" evidence="2">
    <location>
        <position position="182"/>
    </location>
    <ligand>
        <name>heme b</name>
        <dbReference type="ChEBI" id="CHEBI:60344"/>
        <label>b562</label>
    </ligand>
    <ligandPart>
        <name>Fe</name>
        <dbReference type="ChEBI" id="CHEBI:18248"/>
    </ligandPart>
</feature>
<feature type="binding site" description="axial binding residue" evidence="2">
    <location>
        <position position="196"/>
    </location>
    <ligand>
        <name>heme b</name>
        <dbReference type="ChEBI" id="CHEBI:60344"/>
        <label>b566</label>
    </ligand>
    <ligandPart>
        <name>Fe</name>
        <dbReference type="ChEBI" id="CHEBI:18248"/>
    </ligandPart>
</feature>
<feature type="binding site" evidence="2">
    <location>
        <position position="201"/>
    </location>
    <ligand>
        <name>a ubiquinone</name>
        <dbReference type="ChEBI" id="CHEBI:16389"/>
    </ligand>
</feature>
<feature type="sequence variant" description="In strain: Isolate 2.">
    <original>T</original>
    <variation>M</variation>
    <location>
        <position position="237"/>
    </location>
</feature>
<comment type="function">
    <text evidence="2">Component of the ubiquinol-cytochrome c reductase complex (complex III or cytochrome b-c1 complex) that is part of the mitochondrial respiratory chain. The b-c1 complex mediates electron transfer from ubiquinol to cytochrome c. Contributes to the generation of a proton gradient across the mitochondrial membrane that is then used for ATP synthesis.</text>
</comment>
<comment type="cofactor">
    <cofactor evidence="2">
        <name>heme b</name>
        <dbReference type="ChEBI" id="CHEBI:60344"/>
    </cofactor>
    <text evidence="2">Binds 2 heme b groups non-covalently.</text>
</comment>
<comment type="subunit">
    <text evidence="2">The cytochrome bc1 complex contains 11 subunits: 3 respiratory subunits (MT-CYB, CYC1 and UQCRFS1), 2 core proteins (UQCRC1 and UQCRC2) and 6 low-molecular weight proteins (UQCRH/QCR6, UQCRB/QCR7, UQCRQ/QCR8, UQCR10/QCR9, UQCR11/QCR10 and a cleavage product of UQCRFS1). This cytochrome bc1 complex then forms a dimer.</text>
</comment>
<comment type="subcellular location">
    <subcellularLocation>
        <location evidence="2">Mitochondrion inner membrane</location>
        <topology evidence="2">Multi-pass membrane protein</topology>
    </subcellularLocation>
</comment>
<comment type="miscellaneous">
    <text evidence="1">Heme 1 (or BL or b562) is low-potential and absorbs at about 562 nm, and heme 2 (or BH or b566) is high-potential and absorbs at about 566 nm.</text>
</comment>
<comment type="similarity">
    <text evidence="3 4">Belongs to the cytochrome b family.</text>
</comment>
<comment type="caution">
    <text evidence="2">The full-length protein contains only eight transmembrane helices, not nine as predicted by bioinformatics tools.</text>
</comment>
<keyword id="KW-0249">Electron transport</keyword>
<keyword id="KW-0349">Heme</keyword>
<keyword id="KW-0408">Iron</keyword>
<keyword id="KW-0472">Membrane</keyword>
<keyword id="KW-0479">Metal-binding</keyword>
<keyword id="KW-0496">Mitochondrion</keyword>
<keyword id="KW-0999">Mitochondrion inner membrane</keyword>
<keyword id="KW-0679">Respiratory chain</keyword>
<keyword id="KW-0812">Transmembrane</keyword>
<keyword id="KW-1133">Transmembrane helix</keyword>
<keyword id="KW-0813">Transport</keyword>
<keyword id="KW-0830">Ubiquinone</keyword>
<accession>Q6JDU0</accession>
<accession>Q6JDT9</accession>